<comment type="function">
    <text evidence="1">Catalyzes the transfer of the phosphoribosyl group of 5-phosphorylribose-1-pyrophosphate (PRPP) to anthranilate to yield N-(5'-phosphoribosyl)-anthranilate (PRA).</text>
</comment>
<comment type="catalytic activity">
    <reaction evidence="1">
        <text>N-(5-phospho-beta-D-ribosyl)anthranilate + diphosphate = 5-phospho-alpha-D-ribose 1-diphosphate + anthranilate</text>
        <dbReference type="Rhea" id="RHEA:11768"/>
        <dbReference type="ChEBI" id="CHEBI:16567"/>
        <dbReference type="ChEBI" id="CHEBI:18277"/>
        <dbReference type="ChEBI" id="CHEBI:33019"/>
        <dbReference type="ChEBI" id="CHEBI:58017"/>
        <dbReference type="EC" id="2.4.2.18"/>
    </reaction>
</comment>
<comment type="cofactor">
    <cofactor evidence="1">
        <name>Mg(2+)</name>
        <dbReference type="ChEBI" id="CHEBI:18420"/>
    </cofactor>
    <text evidence="1">Binds 2 magnesium ions per monomer.</text>
</comment>
<comment type="pathway">
    <text evidence="1">Amino-acid biosynthesis; L-tryptophan biosynthesis; L-tryptophan from chorismate: step 2/5.</text>
</comment>
<comment type="subunit">
    <text evidence="1">Homodimer.</text>
</comment>
<comment type="similarity">
    <text evidence="1">Belongs to the anthranilate phosphoribosyltransferase family.</text>
</comment>
<sequence length="339" mass="34624">MQNIYLCLTAFARGTYPDDAAIAGAFDELMSGDAPDAAIGGFLVGLAALGERPSDIAAGARALRSRMTRIEAPVGAIDTCGTGGDGKGAWNISTTAAIIAAGAGATVAKHGNRAASSKSGSSDVLAQLGVKLDCPPAAVERSLAEARVGFLFAPAHHAAVRHVGPARQALKVRTVFNLLGPLSNPAGVKRQLLGVYDRRWLVPIAEALRDLGCEHALVICGQDGMDELTTTTGSDIAELRDGDIREYSFHPEEAGLALVREADLQGGTPADNAAAIRALLDGQQGAFRDIAILNAGAALVLAGLATTIPEGTSLAAAAIDDGRAKAALMRMVAISNGEA</sequence>
<name>TRPD_MARMM</name>
<proteinExistence type="inferred from homology"/>
<gene>
    <name evidence="1" type="primary">trpD</name>
    <name type="ordered locus">Mmar10_1400</name>
</gene>
<accession>Q0APU5</accession>
<protein>
    <recommendedName>
        <fullName evidence="1">Anthranilate phosphoribosyltransferase</fullName>
        <ecNumber evidence="1">2.4.2.18</ecNumber>
    </recommendedName>
</protein>
<organism>
    <name type="scientific">Maricaulis maris (strain MCS10)</name>
    <name type="common">Caulobacter maris</name>
    <dbReference type="NCBI Taxonomy" id="394221"/>
    <lineage>
        <taxon>Bacteria</taxon>
        <taxon>Pseudomonadati</taxon>
        <taxon>Pseudomonadota</taxon>
        <taxon>Alphaproteobacteria</taxon>
        <taxon>Maricaulales</taxon>
        <taxon>Maricaulaceae</taxon>
        <taxon>Maricaulis</taxon>
    </lineage>
</organism>
<evidence type="ECO:0000255" key="1">
    <source>
        <dbReference type="HAMAP-Rule" id="MF_00211"/>
    </source>
</evidence>
<feature type="chain" id="PRO_1000043027" description="Anthranilate phosphoribosyltransferase">
    <location>
        <begin position="1"/>
        <end position="339"/>
    </location>
</feature>
<feature type="binding site" evidence="1">
    <location>
        <position position="81"/>
    </location>
    <ligand>
        <name>5-phospho-alpha-D-ribose 1-diphosphate</name>
        <dbReference type="ChEBI" id="CHEBI:58017"/>
    </ligand>
</feature>
<feature type="binding site" evidence="1">
    <location>
        <position position="81"/>
    </location>
    <ligand>
        <name>anthranilate</name>
        <dbReference type="ChEBI" id="CHEBI:16567"/>
        <label>1</label>
    </ligand>
</feature>
<feature type="binding site" evidence="1">
    <location>
        <begin position="84"/>
        <end position="85"/>
    </location>
    <ligand>
        <name>5-phospho-alpha-D-ribose 1-diphosphate</name>
        <dbReference type="ChEBI" id="CHEBI:58017"/>
    </ligand>
</feature>
<feature type="binding site" evidence="1">
    <location>
        <begin position="91"/>
        <end position="94"/>
    </location>
    <ligand>
        <name>5-phospho-alpha-D-ribose 1-diphosphate</name>
        <dbReference type="ChEBI" id="CHEBI:58017"/>
    </ligand>
</feature>
<feature type="binding site" evidence="1">
    <location>
        <position position="93"/>
    </location>
    <ligand>
        <name>Mg(2+)</name>
        <dbReference type="ChEBI" id="CHEBI:18420"/>
        <label>1</label>
    </ligand>
</feature>
<feature type="binding site" evidence="1">
    <location>
        <begin position="109"/>
        <end position="117"/>
    </location>
    <ligand>
        <name>5-phospho-alpha-D-ribose 1-diphosphate</name>
        <dbReference type="ChEBI" id="CHEBI:58017"/>
    </ligand>
</feature>
<feature type="binding site" evidence="1">
    <location>
        <position position="112"/>
    </location>
    <ligand>
        <name>anthranilate</name>
        <dbReference type="ChEBI" id="CHEBI:16567"/>
        <label>1</label>
    </ligand>
</feature>
<feature type="binding site" evidence="1">
    <location>
        <position position="121"/>
    </location>
    <ligand>
        <name>5-phospho-alpha-D-ribose 1-diphosphate</name>
        <dbReference type="ChEBI" id="CHEBI:58017"/>
    </ligand>
</feature>
<feature type="binding site" evidence="1">
    <location>
        <position position="167"/>
    </location>
    <ligand>
        <name>anthranilate</name>
        <dbReference type="ChEBI" id="CHEBI:16567"/>
        <label>2</label>
    </ligand>
</feature>
<feature type="binding site" evidence="1">
    <location>
        <position position="226"/>
    </location>
    <ligand>
        <name>Mg(2+)</name>
        <dbReference type="ChEBI" id="CHEBI:18420"/>
        <label>2</label>
    </ligand>
</feature>
<feature type="binding site" evidence="1">
    <location>
        <position position="227"/>
    </location>
    <ligand>
        <name>Mg(2+)</name>
        <dbReference type="ChEBI" id="CHEBI:18420"/>
        <label>1</label>
    </ligand>
</feature>
<feature type="binding site" evidence="1">
    <location>
        <position position="227"/>
    </location>
    <ligand>
        <name>Mg(2+)</name>
        <dbReference type="ChEBI" id="CHEBI:18420"/>
        <label>2</label>
    </ligand>
</feature>
<keyword id="KW-0028">Amino-acid biosynthesis</keyword>
<keyword id="KW-0057">Aromatic amino acid biosynthesis</keyword>
<keyword id="KW-0328">Glycosyltransferase</keyword>
<keyword id="KW-0460">Magnesium</keyword>
<keyword id="KW-0479">Metal-binding</keyword>
<keyword id="KW-1185">Reference proteome</keyword>
<keyword id="KW-0808">Transferase</keyword>
<keyword id="KW-0822">Tryptophan biosynthesis</keyword>
<reference key="1">
    <citation type="submission" date="2006-08" db="EMBL/GenBank/DDBJ databases">
        <title>Complete sequence of Maricaulis maris MCS10.</title>
        <authorList>
            <consortium name="US DOE Joint Genome Institute"/>
            <person name="Copeland A."/>
            <person name="Lucas S."/>
            <person name="Lapidus A."/>
            <person name="Barry K."/>
            <person name="Detter J.C."/>
            <person name="Glavina del Rio T."/>
            <person name="Hammon N."/>
            <person name="Israni S."/>
            <person name="Dalin E."/>
            <person name="Tice H."/>
            <person name="Pitluck S."/>
            <person name="Saunders E."/>
            <person name="Brettin T."/>
            <person name="Bruce D."/>
            <person name="Han C."/>
            <person name="Tapia R."/>
            <person name="Gilna P."/>
            <person name="Schmutz J."/>
            <person name="Larimer F."/>
            <person name="Land M."/>
            <person name="Hauser L."/>
            <person name="Kyrpides N."/>
            <person name="Mikhailova N."/>
            <person name="Viollier P."/>
            <person name="Stephens C."/>
            <person name="Richardson P."/>
        </authorList>
    </citation>
    <scope>NUCLEOTIDE SEQUENCE [LARGE SCALE GENOMIC DNA]</scope>
    <source>
        <strain>MCS10</strain>
    </source>
</reference>
<dbReference type="EC" id="2.4.2.18" evidence="1"/>
<dbReference type="EMBL" id="CP000449">
    <property type="protein sequence ID" value="ABI65692.1"/>
    <property type="molecule type" value="Genomic_DNA"/>
</dbReference>
<dbReference type="RefSeq" id="WP_011643339.1">
    <property type="nucleotide sequence ID" value="NC_008347.1"/>
</dbReference>
<dbReference type="SMR" id="Q0APU5"/>
<dbReference type="STRING" id="394221.Mmar10_1400"/>
<dbReference type="KEGG" id="mmr:Mmar10_1400"/>
<dbReference type="eggNOG" id="COG0547">
    <property type="taxonomic scope" value="Bacteria"/>
</dbReference>
<dbReference type="HOGENOM" id="CLU_034315_2_1_5"/>
<dbReference type="OrthoDB" id="9806430at2"/>
<dbReference type="UniPathway" id="UPA00035">
    <property type="reaction ID" value="UER00041"/>
</dbReference>
<dbReference type="Proteomes" id="UP000001964">
    <property type="component" value="Chromosome"/>
</dbReference>
<dbReference type="GO" id="GO:0005829">
    <property type="term" value="C:cytosol"/>
    <property type="evidence" value="ECO:0007669"/>
    <property type="project" value="TreeGrafter"/>
</dbReference>
<dbReference type="GO" id="GO:0004048">
    <property type="term" value="F:anthranilate phosphoribosyltransferase activity"/>
    <property type="evidence" value="ECO:0007669"/>
    <property type="project" value="UniProtKB-UniRule"/>
</dbReference>
<dbReference type="GO" id="GO:0000287">
    <property type="term" value="F:magnesium ion binding"/>
    <property type="evidence" value="ECO:0007669"/>
    <property type="project" value="UniProtKB-UniRule"/>
</dbReference>
<dbReference type="GO" id="GO:0000162">
    <property type="term" value="P:L-tryptophan biosynthetic process"/>
    <property type="evidence" value="ECO:0007669"/>
    <property type="project" value="UniProtKB-UniRule"/>
</dbReference>
<dbReference type="FunFam" id="3.40.1030.10:FF:000002">
    <property type="entry name" value="Anthranilate phosphoribosyltransferase"/>
    <property type="match status" value="1"/>
</dbReference>
<dbReference type="Gene3D" id="3.40.1030.10">
    <property type="entry name" value="Nucleoside phosphorylase/phosphoribosyltransferase catalytic domain"/>
    <property type="match status" value="1"/>
</dbReference>
<dbReference type="Gene3D" id="1.20.970.10">
    <property type="entry name" value="Transferase, Pyrimidine Nucleoside Phosphorylase, Chain C"/>
    <property type="match status" value="1"/>
</dbReference>
<dbReference type="HAMAP" id="MF_00211">
    <property type="entry name" value="TrpD"/>
    <property type="match status" value="1"/>
</dbReference>
<dbReference type="InterPro" id="IPR005940">
    <property type="entry name" value="Anthranilate_Pribosyl_Tfrase"/>
</dbReference>
<dbReference type="InterPro" id="IPR000312">
    <property type="entry name" value="Glycosyl_Trfase_fam3"/>
</dbReference>
<dbReference type="InterPro" id="IPR017459">
    <property type="entry name" value="Glycosyl_Trfase_fam3_N_dom"/>
</dbReference>
<dbReference type="InterPro" id="IPR036320">
    <property type="entry name" value="Glycosyl_Trfase_fam3_N_dom_sf"/>
</dbReference>
<dbReference type="InterPro" id="IPR035902">
    <property type="entry name" value="Nuc_phospho_transferase"/>
</dbReference>
<dbReference type="NCBIfam" id="TIGR01245">
    <property type="entry name" value="trpD"/>
    <property type="match status" value="1"/>
</dbReference>
<dbReference type="PANTHER" id="PTHR43285">
    <property type="entry name" value="ANTHRANILATE PHOSPHORIBOSYLTRANSFERASE"/>
    <property type="match status" value="1"/>
</dbReference>
<dbReference type="PANTHER" id="PTHR43285:SF2">
    <property type="entry name" value="ANTHRANILATE PHOSPHORIBOSYLTRANSFERASE"/>
    <property type="match status" value="1"/>
</dbReference>
<dbReference type="Pfam" id="PF02885">
    <property type="entry name" value="Glycos_trans_3N"/>
    <property type="match status" value="1"/>
</dbReference>
<dbReference type="Pfam" id="PF00591">
    <property type="entry name" value="Glycos_transf_3"/>
    <property type="match status" value="1"/>
</dbReference>
<dbReference type="SUPFAM" id="SSF52418">
    <property type="entry name" value="Nucleoside phosphorylase/phosphoribosyltransferase catalytic domain"/>
    <property type="match status" value="1"/>
</dbReference>
<dbReference type="SUPFAM" id="SSF47648">
    <property type="entry name" value="Nucleoside phosphorylase/phosphoribosyltransferase N-terminal domain"/>
    <property type="match status" value="1"/>
</dbReference>